<geneLocation type="plasmid">
    <name>IncN R46</name>
</geneLocation>
<geneLocation type="plasmid">
    <name>pBP11</name>
</geneLocation>
<accession>P0A1V8</accession>
<accession>P05191</accession>
<accession>Q57015</accession>
<comment type="function">
    <text>This is an oxacillin-hydrolyzing beta-lactamase.</text>
</comment>
<comment type="catalytic activity">
    <reaction evidence="2">
        <text>a beta-lactam + H2O = a substituted beta-amino acid</text>
        <dbReference type="Rhea" id="RHEA:20401"/>
        <dbReference type="ChEBI" id="CHEBI:15377"/>
        <dbReference type="ChEBI" id="CHEBI:35627"/>
        <dbReference type="ChEBI" id="CHEBI:140347"/>
        <dbReference type="EC" id="3.5.2.6"/>
    </reaction>
</comment>
<comment type="similarity">
    <text evidence="5">Belongs to the class-D beta-lactamase family.</text>
</comment>
<name>BLO2_SALTM</name>
<reference key="1">
    <citation type="journal article" date="1985" name="FEBS Lett.">
        <title>Sequence of the OXA2 beta-lactamase: comparison with other penicillin-reactive enzymes.</title>
        <authorList>
            <person name="Dale J.W."/>
            <person name="Godwin D."/>
            <person name="Mossakowska D."/>
            <person name="Stephenson P."/>
            <person name="Wall S."/>
        </authorList>
    </citation>
    <scope>NUCLEOTIDE SEQUENCE [GENOMIC DNA]</scope>
    <source>
        <strain>Type 1A</strain>
        <plasmid>IncN R46</plasmid>
    </source>
</reference>
<reference key="2">
    <citation type="journal article" date="1989" name="Eur. J. Biochem.">
        <title>Oxacillin-hydrolysing beta-lactamases. A comparative analysis at nucleotide and amino acid sequence levels.</title>
        <authorList>
            <person name="Mossakowska D."/>
            <person name="Ali N.A."/>
            <person name="Dale J.W."/>
        </authorList>
    </citation>
    <scope>NUCLEOTIDE SEQUENCE [GENOMIC DNA]</scope>
    <source>
        <plasmid>IncN R46</plasmid>
    </source>
</reference>
<reference key="3">
    <citation type="journal article" date="1984" name="Biochem. J.">
        <title>Improved purification and characterization of the OXA-2 beta-lactamase.</title>
        <authorList>
            <person name="Holland S."/>
            <person name="Dale J.W."/>
        </authorList>
    </citation>
    <scope>PROTEIN SEQUENCE OF 22-32</scope>
    <source>
        <plasmid>IncN R46</plasmid>
    </source>
</reference>
<reference key="4">
    <citation type="journal article" date="1989" name="J. Gen. Microbiol.">
        <title>Nucleotide sequence of an OXA-2 beta-lactamase gene from the R-plasmid R1767 derived plasmid pBP11 and comparison to closely related resistance determinants found in R46 and Tn2603.</title>
        <authorList>
            <person name="Nuecken E.J."/>
            <person name="Henschke R.B."/>
            <person name="Schmidt F.R.J."/>
        </authorList>
    </citation>
    <scope>NUCLEOTIDE SEQUENCE [GENOMIC DNA]</scope>
    <source>
        <plasmid>pBP11</plasmid>
    </source>
</reference>
<reference key="5">
    <citation type="journal article" date="1993" name="Biochem. J.">
        <title>Substrate-induced inactivation of the OXA2 beta-lactamase.</title>
        <authorList>
            <person name="Ledent P."/>
            <person name="Frere J.M."/>
        </authorList>
    </citation>
    <scope>X-RAY CRYSTALLOGRAPHY (1.5 ANGSTROMS) OF 22-275</scope>
    <scope>CARBOXYLATION AT LYS-75</scope>
</reference>
<protein>
    <recommendedName>
        <fullName>Beta-lactamase OXA-2</fullName>
        <ecNumber>3.5.2.6</ecNumber>
    </recommendedName>
    <alternativeName>
        <fullName>Penicillinase</fullName>
    </alternativeName>
</protein>
<gene>
    <name type="primary">bla</name>
    <name type="synonym">oxa2</name>
</gene>
<sequence length="275" mass="31686">MAIRIFAILFSIFSLATFAHAQEGTLERSDWRKFFSEFQAKGTIVVADERQADRAMLVFDPVRSKKRYSPASTFKIPHTLFALDAGAVRDEFQIFRWDGVNRGFAGHNQDQDLRSAMRNSTVWVYELFAKEIGDDKARRYLKKIDYGNADPSTSNGDYWIEGSLAISAQEQIAFLRKLYRNELPFRVEHQRLVKDLMIVEAGRNWILRAKTGWEGRMGWWVGWVEWPTGSVFFALNIDTPNRMDDLFKREAIVRAILRSIEALPPNPAVNSDAAR</sequence>
<organism>
    <name type="scientific">Salmonella typhimurium</name>
    <dbReference type="NCBI Taxonomy" id="90371"/>
    <lineage>
        <taxon>Bacteria</taxon>
        <taxon>Pseudomonadati</taxon>
        <taxon>Pseudomonadota</taxon>
        <taxon>Gammaproteobacteria</taxon>
        <taxon>Enterobacterales</taxon>
        <taxon>Enterobacteriaceae</taxon>
        <taxon>Salmonella</taxon>
    </lineage>
</organism>
<feature type="signal peptide" evidence="3">
    <location>
        <begin position="1"/>
        <end position="21"/>
    </location>
</feature>
<feature type="chain" id="PRO_0000017026" description="Beta-lactamase OXA-2">
    <location>
        <begin position="22"/>
        <end position="275"/>
    </location>
</feature>
<feature type="active site" description="Acyl-ester intermediate" evidence="2">
    <location>
        <position position="72"/>
    </location>
</feature>
<feature type="binding site" evidence="1">
    <location>
        <begin position="210"/>
        <end position="212"/>
    </location>
    <ligand>
        <name>substrate</name>
    </ligand>
</feature>
<feature type="modified residue" description="N6-carboxylysine" evidence="4">
    <location>
        <position position="75"/>
    </location>
</feature>
<feature type="helix" evidence="6">
    <location>
        <begin position="29"/>
        <end position="31"/>
    </location>
</feature>
<feature type="helix" evidence="6">
    <location>
        <begin position="32"/>
        <end position="37"/>
    </location>
</feature>
<feature type="strand" evidence="6">
    <location>
        <begin position="42"/>
        <end position="48"/>
    </location>
</feature>
<feature type="strand" evidence="6">
    <location>
        <begin position="50"/>
        <end position="53"/>
    </location>
</feature>
<feature type="strand" evidence="6">
    <location>
        <begin position="57"/>
        <end position="60"/>
    </location>
</feature>
<feature type="helix" evidence="6">
    <location>
        <begin position="61"/>
        <end position="64"/>
    </location>
</feature>
<feature type="helix" evidence="6">
    <location>
        <begin position="71"/>
        <end position="74"/>
    </location>
</feature>
<feature type="helix" evidence="6">
    <location>
        <begin position="75"/>
        <end position="84"/>
    </location>
</feature>
<feature type="turn" evidence="6">
    <location>
        <begin position="105"/>
        <end position="107"/>
    </location>
</feature>
<feature type="helix" evidence="6">
    <location>
        <begin position="113"/>
        <end position="118"/>
    </location>
</feature>
<feature type="helix" evidence="6">
    <location>
        <begin position="122"/>
        <end position="132"/>
    </location>
</feature>
<feature type="helix" evidence="6">
    <location>
        <begin position="134"/>
        <end position="143"/>
    </location>
</feature>
<feature type="turn" evidence="6">
    <location>
        <begin position="158"/>
        <end position="160"/>
    </location>
</feature>
<feature type="strand" evidence="6">
    <location>
        <begin position="161"/>
        <end position="163"/>
    </location>
</feature>
<feature type="helix" evidence="6">
    <location>
        <begin position="168"/>
        <end position="179"/>
    </location>
</feature>
<feature type="strand" evidence="6">
    <location>
        <begin position="183"/>
        <end position="185"/>
    </location>
</feature>
<feature type="helix" evidence="6">
    <location>
        <begin position="187"/>
        <end position="196"/>
    </location>
</feature>
<feature type="strand" evidence="6">
    <location>
        <begin position="198"/>
        <end position="202"/>
    </location>
</feature>
<feature type="strand" evidence="6">
    <location>
        <begin position="205"/>
        <end position="226"/>
    </location>
</feature>
<feature type="strand" evidence="6">
    <location>
        <begin position="229"/>
        <end position="238"/>
    </location>
</feature>
<feature type="helix" evidence="6">
    <location>
        <begin position="242"/>
        <end position="247"/>
    </location>
</feature>
<feature type="helix" evidence="6">
    <location>
        <begin position="248"/>
        <end position="259"/>
    </location>
</feature>
<keyword id="KW-0002">3D-structure</keyword>
<keyword id="KW-0046">Antibiotic resistance</keyword>
<keyword id="KW-0903">Direct protein sequencing</keyword>
<keyword id="KW-0378">Hydrolase</keyword>
<keyword id="KW-0614">Plasmid</keyword>
<keyword id="KW-0732">Signal</keyword>
<proteinExistence type="evidence at protein level"/>
<dbReference type="EC" id="3.5.2.6"/>
<dbReference type="EMBL" id="M25261">
    <property type="protein sequence ID" value="AAA98357.1"/>
    <property type="molecule type" value="Genomic_DNA"/>
</dbReference>
<dbReference type="EMBL" id="X03037">
    <property type="protein sequence ID" value="CAA26839.1"/>
    <property type="molecule type" value="Genomic_DNA"/>
</dbReference>
<dbReference type="EMBL" id="X07260">
    <property type="protein sequence ID" value="CAA30246.1"/>
    <property type="molecule type" value="Genomic_DNA"/>
</dbReference>
<dbReference type="PIR" id="A91350">
    <property type="entry name" value="PNEBT"/>
</dbReference>
<dbReference type="RefSeq" id="NP_511223.1">
    <property type="nucleotide sequence ID" value="NC_003292.1"/>
</dbReference>
<dbReference type="RefSeq" id="NP_511225.1">
    <property type="nucleotide sequence ID" value="NC_003292.1"/>
</dbReference>
<dbReference type="PDB" id="1K38">
    <property type="method" value="X-ray"/>
    <property type="resolution" value="1.50 A"/>
    <property type="chains" value="A/B=22-275"/>
</dbReference>
<dbReference type="PDBsum" id="1K38"/>
<dbReference type="SMR" id="P0A1V8"/>
<dbReference type="DrugBank" id="DB01942">
    <property type="generic name" value="Formic acid"/>
</dbReference>
<dbReference type="DrugBank" id="DB03801">
    <property type="generic name" value="Lysine Nz-Carboxylic Acid"/>
</dbReference>
<dbReference type="CARD" id="ARO:3001397">
    <property type="molecule name" value="OXA-2"/>
    <property type="mechanism identifier" value="ARO:0001004"/>
    <property type="mechanism name" value="antibiotic inactivation"/>
</dbReference>
<dbReference type="KEGG" id="ag:CAA30246"/>
<dbReference type="EvolutionaryTrace" id="P0A1V8"/>
<dbReference type="GO" id="GO:0008800">
    <property type="term" value="F:beta-lactamase activity"/>
    <property type="evidence" value="ECO:0007669"/>
    <property type="project" value="UniProtKB-EC"/>
</dbReference>
<dbReference type="GO" id="GO:0008658">
    <property type="term" value="F:penicillin binding"/>
    <property type="evidence" value="ECO:0007669"/>
    <property type="project" value="InterPro"/>
</dbReference>
<dbReference type="GO" id="GO:0017001">
    <property type="term" value="P:antibiotic catabolic process"/>
    <property type="evidence" value="ECO:0007669"/>
    <property type="project" value="InterPro"/>
</dbReference>
<dbReference type="GO" id="GO:0046677">
    <property type="term" value="P:response to antibiotic"/>
    <property type="evidence" value="ECO:0007669"/>
    <property type="project" value="UniProtKB-KW"/>
</dbReference>
<dbReference type="Gene3D" id="3.40.710.10">
    <property type="entry name" value="DD-peptidase/beta-lactamase superfamily"/>
    <property type="match status" value="1"/>
</dbReference>
<dbReference type="InterPro" id="IPR012338">
    <property type="entry name" value="Beta-lactam/transpept-like"/>
</dbReference>
<dbReference type="InterPro" id="IPR002137">
    <property type="entry name" value="Beta-lactam_class-D_AS"/>
</dbReference>
<dbReference type="InterPro" id="IPR001460">
    <property type="entry name" value="PCN-bd_Tpept"/>
</dbReference>
<dbReference type="NCBIfam" id="NF012161">
    <property type="entry name" value="bla_class_D_main"/>
    <property type="match status" value="1"/>
</dbReference>
<dbReference type="NCBIfam" id="NF000267">
    <property type="entry name" value="blaOXA-2_like"/>
    <property type="match status" value="1"/>
</dbReference>
<dbReference type="Pfam" id="PF00905">
    <property type="entry name" value="Transpeptidase"/>
    <property type="match status" value="1"/>
</dbReference>
<dbReference type="SUPFAM" id="SSF56601">
    <property type="entry name" value="beta-lactamase/transpeptidase-like"/>
    <property type="match status" value="1"/>
</dbReference>
<dbReference type="PROSITE" id="PS00337">
    <property type="entry name" value="BETA_LACTAMASE_D"/>
    <property type="match status" value="1"/>
</dbReference>
<evidence type="ECO:0000250" key="1"/>
<evidence type="ECO:0000255" key="2">
    <source>
        <dbReference type="PROSITE-ProRule" id="PRU10103"/>
    </source>
</evidence>
<evidence type="ECO:0000269" key="3">
    <source>
    </source>
</evidence>
<evidence type="ECO:0000269" key="4">
    <source>
    </source>
</evidence>
<evidence type="ECO:0000305" key="5"/>
<evidence type="ECO:0007829" key="6">
    <source>
        <dbReference type="PDB" id="1K38"/>
    </source>
</evidence>